<feature type="chain" id="PRO_0000193662" description="Eukaryotic translation initiation factor 4E-1">
    <location>
        <begin position="1"/>
        <end position="215"/>
    </location>
</feature>
<feature type="region of interest" description="Disordered" evidence="3">
    <location>
        <begin position="1"/>
        <end position="32"/>
    </location>
</feature>
<feature type="region of interest" description="EIF4G-binding" evidence="2">
    <location>
        <begin position="40"/>
        <end position="43"/>
    </location>
</feature>
<feature type="region of interest" description="EIF4G-binding" evidence="2">
    <location>
        <begin position="50"/>
        <end position="86"/>
    </location>
</feature>
<feature type="region of interest" description="EIF4G-binding" evidence="2">
    <location>
        <begin position="134"/>
        <end position="143"/>
    </location>
</feature>
<feature type="compositionally biased region" description="Acidic residues" evidence="3">
    <location>
        <begin position="16"/>
        <end position="27"/>
    </location>
</feature>
<feature type="binding site" evidence="5 11">
    <location>
        <begin position="58"/>
        <end position="63"/>
    </location>
    <ligand>
        <name>mRNA</name>
        <dbReference type="ChEBI" id="CHEBI:33699"/>
    </ligand>
    <ligandPart>
        <name>N(7)-methylguanosine 5'-triphosphate group</name>
        <dbReference type="ChEBI" id="CHEBI:74429"/>
        <note>m7GTP residue in mRNA cap</note>
    </ligandPart>
</feature>
<feature type="binding site" evidence="5 11">
    <location>
        <position position="90"/>
    </location>
    <ligand>
        <name>mRNA</name>
        <dbReference type="ChEBI" id="CHEBI:33699"/>
    </ligand>
    <ligandPart>
        <name>N(7)-methylguanosine 5'-triphosphate group</name>
        <dbReference type="ChEBI" id="CHEBI:74429"/>
        <note>m7GTP residue in mRNA cap</note>
    </ligandPart>
</feature>
<feature type="binding site" evidence="5 11">
    <location>
        <begin position="108"/>
        <end position="109"/>
    </location>
    <ligand>
        <name>mRNA</name>
        <dbReference type="ChEBI" id="CHEBI:33699"/>
    </ligand>
    <ligandPart>
        <name>N(7)-methylguanosine 5'-triphosphate group</name>
        <dbReference type="ChEBI" id="CHEBI:74429"/>
        <note>m7GTP residue in mRNA cap</note>
    </ligandPart>
</feature>
<feature type="binding site" evidence="5 11">
    <location>
        <begin position="158"/>
        <end position="163"/>
    </location>
    <ligand>
        <name>mRNA</name>
        <dbReference type="ChEBI" id="CHEBI:33699"/>
    </ligand>
    <ligandPart>
        <name>N(7)-methylguanosine 5'-triphosphate group</name>
        <dbReference type="ChEBI" id="CHEBI:74429"/>
        <note>m7GTP residue in mRNA cap</note>
    </ligandPart>
</feature>
<feature type="binding site" evidence="2">
    <location>
        <begin position="203"/>
        <end position="207"/>
    </location>
    <ligand>
        <name>mRNA</name>
        <dbReference type="ChEBI" id="CHEBI:33699"/>
    </ligand>
    <ligandPart>
        <name>N(7)-methylguanosine 5'-triphosphate group</name>
        <dbReference type="ChEBI" id="CHEBI:74429"/>
        <note>m7GTP residue in mRNA cap</note>
    </ligandPart>
</feature>
<feature type="disulfide bond" evidence="5 10">
    <location>
        <begin position="113"/>
        <end position="151"/>
    </location>
</feature>
<feature type="sequence conflict" description="In Ref. 3; CDJ26525." evidence="7" ref="3">
    <original>T</original>
    <variation>S</variation>
    <location>
        <position position="38"/>
    </location>
</feature>
<feature type="sequence conflict" description="In Ref. 3; CDJ26525." evidence="7" ref="3">
    <original>K</original>
    <variation>R</variation>
    <location>
        <position position="191"/>
    </location>
</feature>
<feature type="strand" evidence="12">
    <location>
        <begin position="41"/>
        <end position="51"/>
    </location>
</feature>
<feature type="strand" evidence="12">
    <location>
        <begin position="59"/>
        <end position="61"/>
    </location>
</feature>
<feature type="strand" evidence="12">
    <location>
        <begin position="64"/>
        <end position="66"/>
    </location>
</feature>
<feature type="strand" evidence="12">
    <location>
        <begin position="69"/>
        <end position="74"/>
    </location>
</feature>
<feature type="helix" evidence="12">
    <location>
        <begin position="75"/>
        <end position="82"/>
    </location>
</feature>
<feature type="helix" evidence="12">
    <location>
        <begin position="88"/>
        <end position="90"/>
    </location>
</feature>
<feature type="strand" evidence="12">
    <location>
        <begin position="96"/>
        <end position="101"/>
    </location>
</feature>
<feature type="helix" evidence="12">
    <location>
        <begin position="102"/>
        <end position="104"/>
    </location>
</feature>
<feature type="turn" evidence="12">
    <location>
        <begin position="112"/>
        <end position="115"/>
    </location>
</feature>
<feature type="strand" evidence="12">
    <location>
        <begin position="117"/>
        <end position="123"/>
    </location>
</feature>
<feature type="helix" evidence="12">
    <location>
        <begin position="129"/>
        <end position="140"/>
    </location>
</feature>
<feature type="helix" evidence="12">
    <location>
        <begin position="147"/>
        <end position="149"/>
    </location>
</feature>
<feature type="strand" evidence="12">
    <location>
        <begin position="150"/>
        <end position="157"/>
    </location>
</feature>
<feature type="strand" evidence="12">
    <location>
        <begin position="162"/>
        <end position="169"/>
    </location>
</feature>
<feature type="helix" evidence="12">
    <location>
        <begin position="174"/>
        <end position="188"/>
    </location>
</feature>
<feature type="strand" evidence="12">
    <location>
        <begin position="195"/>
        <end position="198"/>
    </location>
</feature>
<feature type="helix" evidence="12">
    <location>
        <begin position="199"/>
        <end position="203"/>
    </location>
</feature>
<feature type="strand" evidence="12">
    <location>
        <begin position="206"/>
        <end position="208"/>
    </location>
</feature>
<feature type="strand" evidence="12">
    <location>
        <begin position="212"/>
        <end position="214"/>
    </location>
</feature>
<comment type="function">
    <text evidence="4 5">Component of the protein complex eIF4F, which is involved in the recognition of the mRNA cap, ATP-dependent unwinding of 5'-terminal secondary structure and recruitment of mRNA to the ribosome (PubMed:1508698). Recognizes and binds the 7-methylguanosine-containing mRNA cap during an early step in the initiation of protein synthesis and facilitates ribosome binding by inducing the unwinding of the mRNAs secondary structures (PubMed:1508698, PubMed:17322339).</text>
</comment>
<comment type="subunit">
    <text evidence="8">EIF4F is a multi-subunit complex, the composition of which varies with external and internal environmental conditions (Probable). It is composed of at least EIF4A, EIF4E and EIF4G (Probable). EIF4E is also known to interact with other partners (Probable). In higher plants two isoforms of EIF4F have been identified, named isoform EIF4F and isoform EIF(iso)4F (Probable). Isoform EIF4F has subunits p220 and p26, whereas isoform EIF(iso)4F has subunits p82 and p28 (Probable).</text>
</comment>
<comment type="subcellular location">
    <subcellularLocation>
        <location evidence="1">Nucleus</location>
    </subcellularLocation>
    <subcellularLocation>
        <location evidence="1">Cytoplasm</location>
    </subcellularLocation>
</comment>
<comment type="PTM">
    <text evidence="5">According to the redox status, the Cys-113-Cys-151 disulfide bridge may have a role in regulating protein function by affecting its ability to bind capped mRNA.</text>
</comment>
<comment type="similarity">
    <text evidence="7">Belongs to the eukaryotic initiation factor 4E family.</text>
</comment>
<organism>
    <name type="scientific">Triticum aestivum</name>
    <name type="common">Wheat</name>
    <dbReference type="NCBI Taxonomy" id="4565"/>
    <lineage>
        <taxon>Eukaryota</taxon>
        <taxon>Viridiplantae</taxon>
        <taxon>Streptophyta</taxon>
        <taxon>Embryophyta</taxon>
        <taxon>Tracheophyta</taxon>
        <taxon>Spermatophyta</taxon>
        <taxon>Magnoliopsida</taxon>
        <taxon>Liliopsida</taxon>
        <taxon>Poales</taxon>
        <taxon>Poaceae</taxon>
        <taxon>BOP clade</taxon>
        <taxon>Pooideae</taxon>
        <taxon>Triticodae</taxon>
        <taxon>Triticeae</taxon>
        <taxon>Triticinae</taxon>
        <taxon>Triticum</taxon>
    </lineage>
</organism>
<accession>P29557</accession>
<accession>A0A1W6I4N8</accession>
<accession>W5D237</accession>
<proteinExistence type="evidence at protein level"/>
<dbReference type="EMBL" id="Z12616">
    <property type="protein sequence ID" value="CAA78262.2"/>
    <property type="molecule type" value="mRNA"/>
</dbReference>
<dbReference type="EMBL" id="KX467330">
    <property type="protein sequence ID" value="ARM39030.1"/>
    <property type="molecule type" value="mRNA"/>
</dbReference>
<dbReference type="EMBL" id="KX467331">
    <property type="protein sequence ID" value="ARM39031.1"/>
    <property type="molecule type" value="mRNA"/>
</dbReference>
<dbReference type="EMBL" id="CBUC010000421">
    <property type="protein sequence ID" value="CDJ26525.1"/>
    <property type="molecule type" value="Genomic_DNA"/>
</dbReference>
<dbReference type="PIR" id="S26493">
    <property type="entry name" value="S26493"/>
</dbReference>
<dbReference type="PDB" id="2IDR">
    <property type="method" value="X-ray"/>
    <property type="resolution" value="1.85 A"/>
    <property type="chains" value="A/B=39-215"/>
</dbReference>
<dbReference type="PDB" id="2IDV">
    <property type="method" value="X-ray"/>
    <property type="resolution" value="2.30 A"/>
    <property type="chains" value="A=39-215"/>
</dbReference>
<dbReference type="PDBsum" id="2IDR"/>
<dbReference type="PDBsum" id="2IDV"/>
<dbReference type="SMR" id="P29557"/>
<dbReference type="ELM" id="P29557"/>
<dbReference type="IntAct" id="P29557">
    <property type="interactions" value="1"/>
</dbReference>
<dbReference type="STRING" id="4565.P29557"/>
<dbReference type="PaxDb" id="4565-Traes_3B_B2BA7CF8B.1"/>
<dbReference type="EnsemblPlants" id="TraesARI3A03G01544490.1">
    <property type="protein sequence ID" value="TraesARI3A03G01544490.1"/>
    <property type="gene ID" value="TraesARI3A03G01544490"/>
</dbReference>
<dbReference type="EnsemblPlants" id="TraesARI3D03G02039540.1">
    <property type="protein sequence ID" value="TraesARI3D03G02039540.1"/>
    <property type="gene ID" value="TraesARI3D03G02039540"/>
</dbReference>
<dbReference type="EnsemblPlants" id="TraesCAD_scaffold_073395_01G000200.1">
    <property type="protein sequence ID" value="TraesCAD_scaffold_073395_01G000200.1"/>
    <property type="gene ID" value="TraesCAD_scaffold_073395_01G000200"/>
</dbReference>
<dbReference type="EnsemblPlants" id="TraesCAD_scaffold_132297_01G000100.1">
    <property type="protein sequence ID" value="TraesCAD_scaffold_132297_01G000100.1"/>
    <property type="gene ID" value="TraesCAD_scaffold_132297_01G000100"/>
</dbReference>
<dbReference type="EnsemblPlants" id="TraesCLE_scaffold_070372_01G000200.1">
    <property type="protein sequence ID" value="TraesCLE_scaffold_070372_01G000200.1"/>
    <property type="gene ID" value="TraesCLE_scaffold_070372_01G000200"/>
</dbReference>
<dbReference type="EnsemblPlants" id="TraesCLE_scaffold_112464_01G000200.1">
    <property type="protein sequence ID" value="TraesCLE_scaffold_112464_01G000200.1"/>
    <property type="gene ID" value="TraesCLE_scaffold_112464_01G000200"/>
</dbReference>
<dbReference type="EnsemblPlants" id="TraesCS3A02G521500.1">
    <property type="protein sequence ID" value="TraesCS3A02G521500.1"/>
    <property type="gene ID" value="TraesCS3A02G521500"/>
</dbReference>
<dbReference type="EnsemblPlants" id="TraesCS3A03G1232100.1">
    <property type="protein sequence ID" value="TraesCS3A03G1232100.1.CDS"/>
    <property type="gene ID" value="TraesCS3A03G1232100"/>
</dbReference>
<dbReference type="EnsemblPlants" id="TraesCS3D02G527800.1">
    <property type="protein sequence ID" value="TraesCS3D02G527800.1"/>
    <property type="gene ID" value="TraesCS3D02G527800"/>
</dbReference>
<dbReference type="EnsemblPlants" id="TraesCS3D03G1167300.1">
    <property type="protein sequence ID" value="TraesCS3D03G1167300.1.CDS"/>
    <property type="gene ID" value="TraesCS3D03G1167300"/>
</dbReference>
<dbReference type="EnsemblPlants" id="TraesJAG3A03G01532630.1">
    <property type="protein sequence ID" value="TraesJAG3A03G01532630.1"/>
    <property type="gene ID" value="TraesJAG3A03G01532630"/>
</dbReference>
<dbReference type="EnsemblPlants" id="TraesJAG3D03G02006410.1">
    <property type="protein sequence ID" value="TraesJAG3D03G02006410.1"/>
    <property type="gene ID" value="TraesJAG3D03G02006410"/>
</dbReference>
<dbReference type="EnsemblPlants" id="TraesJUL3A03G01536910.1">
    <property type="protein sequence ID" value="TraesJUL3A03G01536910.1"/>
    <property type="gene ID" value="TraesJUL3A03G01536910"/>
</dbReference>
<dbReference type="EnsemblPlants" id="TraesJUL3D03G02017320.1">
    <property type="protein sequence ID" value="TraesJUL3D03G02017320.1"/>
    <property type="gene ID" value="TraesJUL3D03G02017320"/>
</dbReference>
<dbReference type="EnsemblPlants" id="TraesKAR3A01G0467350.1">
    <property type="protein sequence ID" value="cds.TraesKAR3A01G0467350.1"/>
    <property type="gene ID" value="TraesKAR3A01G0467350"/>
</dbReference>
<dbReference type="EnsemblPlants" id="TraesKAR3D01G0439820.1">
    <property type="protein sequence ID" value="cds.TraesKAR3D01G0439820.1"/>
    <property type="gene ID" value="TraesKAR3D01G0439820"/>
</dbReference>
<dbReference type="EnsemblPlants" id="TraesLAC3A03G01467890.1">
    <property type="protein sequence ID" value="TraesLAC3A03G01467890.1"/>
    <property type="gene ID" value="TraesLAC3A03G01467890"/>
</dbReference>
<dbReference type="EnsemblPlants" id="TraesLDM3A03G01524830.1">
    <property type="protein sequence ID" value="TraesLDM3A03G01524830.1"/>
    <property type="gene ID" value="TraesLDM3A03G01524830"/>
</dbReference>
<dbReference type="EnsemblPlants" id="TraesLDM3D03G01997490.1">
    <property type="protein sequence ID" value="TraesLDM3D03G01997490.1"/>
    <property type="gene ID" value="TraesLDM3D03G01997490"/>
</dbReference>
<dbReference type="EnsemblPlants" id="TraesMAC3A03G01522300.1">
    <property type="protein sequence ID" value="TraesMAC3A03G01522300.1"/>
    <property type="gene ID" value="TraesMAC3A03G01522300"/>
</dbReference>
<dbReference type="EnsemblPlants" id="TraesMAC3D03G02003120.1">
    <property type="protein sequence ID" value="TraesMAC3D03G02003120.1"/>
    <property type="gene ID" value="TraesMAC3D03G02003120"/>
</dbReference>
<dbReference type="EnsemblPlants" id="TraesNOR3A03G01545470.1">
    <property type="protein sequence ID" value="TraesNOR3A03G01545470.1"/>
    <property type="gene ID" value="TraesNOR3A03G01545470"/>
</dbReference>
<dbReference type="EnsemblPlants" id="TraesNOR3D03G02026190.1">
    <property type="protein sequence ID" value="TraesNOR3D03G02026190.1"/>
    <property type="gene ID" value="TraesNOR3D03G02026190"/>
</dbReference>
<dbReference type="EnsemblPlants" id="TraesPARA_EIv1.0_0890210.1">
    <property type="protein sequence ID" value="TraesPARA_EIv1.0_0890210.1.CDS"/>
    <property type="gene ID" value="TraesPARA_EIv1.0_0890210"/>
</dbReference>
<dbReference type="EnsemblPlants" id="TraesPARA_EIv1.0_1176320.1">
    <property type="protein sequence ID" value="TraesPARA_EIv1.0_1176320.1.CDS"/>
    <property type="gene ID" value="TraesPARA_EIv1.0_1176320"/>
</dbReference>
<dbReference type="EnsemblPlants" id="TraesRN3D0101219200.1">
    <property type="protein sequence ID" value="TraesRN3D0101219200.1"/>
    <property type="gene ID" value="TraesRN3D0101219200"/>
</dbReference>
<dbReference type="EnsemblPlants" id="TraesROB_scaffold_077200_01G000300.1">
    <property type="protein sequence ID" value="TraesROB_scaffold_077200_01G000300.1"/>
    <property type="gene ID" value="TraesROB_scaffold_077200_01G000300"/>
</dbReference>
<dbReference type="EnsemblPlants" id="TraesROB_scaffold_115713_01G000200.1">
    <property type="protein sequence ID" value="TraesROB_scaffold_115713_01G000200.1"/>
    <property type="gene ID" value="TraesROB_scaffold_115713_01G000200"/>
</dbReference>
<dbReference type="EnsemblPlants" id="TraesSTA3A03G01515820.1">
    <property type="protein sequence ID" value="TraesSTA3A03G01515820.1"/>
    <property type="gene ID" value="TraesSTA3A03G01515820"/>
</dbReference>
<dbReference type="EnsemblPlants" id="TraesSTA3D03G01994540.1">
    <property type="protein sequence ID" value="TraesSTA3D03G01994540.1"/>
    <property type="gene ID" value="TraesSTA3D03G01994540"/>
</dbReference>
<dbReference type="EnsemblPlants" id="TraesSYM3A03G01548230.1">
    <property type="protein sequence ID" value="TraesSYM3A03G01548230.1"/>
    <property type="gene ID" value="TraesSYM3A03G01548230"/>
</dbReference>
<dbReference type="EnsemblPlants" id="TraesSYM3D03G02024670.1">
    <property type="protein sequence ID" value="TraesSYM3D03G02024670.1"/>
    <property type="gene ID" value="TraesSYM3D03G02024670"/>
</dbReference>
<dbReference type="EnsemblPlants" id="TraesWEE_scaffold_097257_01G000200.1">
    <property type="protein sequence ID" value="TraesWEE_scaffold_097257_01G000200.1"/>
    <property type="gene ID" value="TraesWEE_scaffold_097257_01G000200"/>
</dbReference>
<dbReference type="EnsemblPlants" id="TraesWEE_scaffold_104681_01G000100.1">
    <property type="protein sequence ID" value="TraesWEE_scaffold_104681_01G000100.1"/>
    <property type="gene ID" value="TraesWEE_scaffold_104681_01G000100"/>
</dbReference>
<dbReference type="Gramene" id="TraesARI3A03G01544490.1">
    <property type="protein sequence ID" value="TraesARI3A03G01544490.1"/>
    <property type="gene ID" value="TraesARI3A03G01544490"/>
</dbReference>
<dbReference type="Gramene" id="TraesARI3D03G02039540.1">
    <property type="protein sequence ID" value="TraesARI3D03G02039540.1"/>
    <property type="gene ID" value="TraesARI3D03G02039540"/>
</dbReference>
<dbReference type="Gramene" id="TraesCAD_scaffold_073395_01G000200.1">
    <property type="protein sequence ID" value="TraesCAD_scaffold_073395_01G000200.1"/>
    <property type="gene ID" value="TraesCAD_scaffold_073395_01G000200"/>
</dbReference>
<dbReference type="Gramene" id="TraesCAD_scaffold_132297_01G000100.1">
    <property type="protein sequence ID" value="TraesCAD_scaffold_132297_01G000100.1"/>
    <property type="gene ID" value="TraesCAD_scaffold_132297_01G000100"/>
</dbReference>
<dbReference type="Gramene" id="TraesCLE_scaffold_070372_01G000200.1">
    <property type="protein sequence ID" value="TraesCLE_scaffold_070372_01G000200.1"/>
    <property type="gene ID" value="TraesCLE_scaffold_070372_01G000200"/>
</dbReference>
<dbReference type="Gramene" id="TraesCLE_scaffold_112464_01G000200.1">
    <property type="protein sequence ID" value="TraesCLE_scaffold_112464_01G000200.1"/>
    <property type="gene ID" value="TraesCLE_scaffold_112464_01G000200"/>
</dbReference>
<dbReference type="Gramene" id="TraesCS3A02G521500.1">
    <property type="protein sequence ID" value="TraesCS3A02G521500.1"/>
    <property type="gene ID" value="TraesCS3A02G521500"/>
</dbReference>
<dbReference type="Gramene" id="TraesCS3A03G1232100.1">
    <property type="protein sequence ID" value="TraesCS3A03G1232100.1.CDS"/>
    <property type="gene ID" value="TraesCS3A03G1232100"/>
</dbReference>
<dbReference type="Gramene" id="TraesCS3D02G527800.1">
    <property type="protein sequence ID" value="TraesCS3D02G527800.1"/>
    <property type="gene ID" value="TraesCS3D02G527800"/>
</dbReference>
<dbReference type="Gramene" id="TraesCS3D03G1167300.1">
    <property type="protein sequence ID" value="TraesCS3D03G1167300.1.CDS"/>
    <property type="gene ID" value="TraesCS3D03G1167300"/>
</dbReference>
<dbReference type="Gramene" id="TraesJAG3A03G01532630.1">
    <property type="protein sequence ID" value="TraesJAG3A03G01532630.1"/>
    <property type="gene ID" value="TraesJAG3A03G01532630"/>
</dbReference>
<dbReference type="Gramene" id="TraesJAG3D03G02006410.1">
    <property type="protein sequence ID" value="TraesJAG3D03G02006410.1"/>
    <property type="gene ID" value="TraesJAG3D03G02006410"/>
</dbReference>
<dbReference type="Gramene" id="TraesJUL3A03G01536910.1">
    <property type="protein sequence ID" value="TraesJUL3A03G01536910.1"/>
    <property type="gene ID" value="TraesJUL3A03G01536910"/>
</dbReference>
<dbReference type="Gramene" id="TraesJUL3D03G02017320.1">
    <property type="protein sequence ID" value="TraesJUL3D03G02017320.1"/>
    <property type="gene ID" value="TraesJUL3D03G02017320"/>
</dbReference>
<dbReference type="Gramene" id="TraesKAR3A01G0467350.1">
    <property type="protein sequence ID" value="cds.TraesKAR3A01G0467350.1"/>
    <property type="gene ID" value="TraesKAR3A01G0467350"/>
</dbReference>
<dbReference type="Gramene" id="TraesKAR3D01G0439820.1">
    <property type="protein sequence ID" value="cds.TraesKAR3D01G0439820.1"/>
    <property type="gene ID" value="TraesKAR3D01G0439820"/>
</dbReference>
<dbReference type="Gramene" id="TraesLAC3A03G01467890.1">
    <property type="protein sequence ID" value="TraesLAC3A03G01467890.1"/>
    <property type="gene ID" value="TraesLAC3A03G01467890"/>
</dbReference>
<dbReference type="Gramene" id="TraesLDM3A03G01524830.1">
    <property type="protein sequence ID" value="TraesLDM3A03G01524830.1"/>
    <property type="gene ID" value="TraesLDM3A03G01524830"/>
</dbReference>
<dbReference type="Gramene" id="TraesLDM3D03G01997490.1">
    <property type="protein sequence ID" value="TraesLDM3D03G01997490.1"/>
    <property type="gene ID" value="TraesLDM3D03G01997490"/>
</dbReference>
<dbReference type="Gramene" id="TraesMAC3A03G01522300.1">
    <property type="protein sequence ID" value="TraesMAC3A03G01522300.1"/>
    <property type="gene ID" value="TraesMAC3A03G01522300"/>
</dbReference>
<dbReference type="Gramene" id="TraesMAC3D03G02003120.1">
    <property type="protein sequence ID" value="TraesMAC3D03G02003120.1"/>
    <property type="gene ID" value="TraesMAC3D03G02003120"/>
</dbReference>
<dbReference type="Gramene" id="TraesNOR3A03G01545470.1">
    <property type="protein sequence ID" value="TraesNOR3A03G01545470.1"/>
    <property type="gene ID" value="TraesNOR3A03G01545470"/>
</dbReference>
<dbReference type="Gramene" id="TraesNOR3D03G02026190.1">
    <property type="protein sequence ID" value="TraesNOR3D03G02026190.1"/>
    <property type="gene ID" value="TraesNOR3D03G02026190"/>
</dbReference>
<dbReference type="Gramene" id="TraesPARA_EIv1.0_0890210.1">
    <property type="protein sequence ID" value="TraesPARA_EIv1.0_0890210.1.CDS"/>
    <property type="gene ID" value="TraesPARA_EIv1.0_0890210"/>
</dbReference>
<dbReference type="Gramene" id="TraesPARA_EIv1.0_1176320.1">
    <property type="protein sequence ID" value="TraesPARA_EIv1.0_1176320.1.CDS"/>
    <property type="gene ID" value="TraesPARA_EIv1.0_1176320"/>
</dbReference>
<dbReference type="Gramene" id="TraesRN3D0101219200.1">
    <property type="protein sequence ID" value="TraesRN3D0101219200.1"/>
    <property type="gene ID" value="TraesRN3D0101219200"/>
</dbReference>
<dbReference type="Gramene" id="TraesROB_scaffold_077200_01G000300.1">
    <property type="protein sequence ID" value="TraesROB_scaffold_077200_01G000300.1"/>
    <property type="gene ID" value="TraesROB_scaffold_077200_01G000300"/>
</dbReference>
<dbReference type="Gramene" id="TraesROB_scaffold_115713_01G000200.1">
    <property type="protein sequence ID" value="TraesROB_scaffold_115713_01G000200.1"/>
    <property type="gene ID" value="TraesROB_scaffold_115713_01G000200"/>
</dbReference>
<dbReference type="Gramene" id="TraesSTA3A03G01515820.1">
    <property type="protein sequence ID" value="TraesSTA3A03G01515820.1"/>
    <property type="gene ID" value="TraesSTA3A03G01515820"/>
</dbReference>
<dbReference type="Gramene" id="TraesSTA3D03G01994540.1">
    <property type="protein sequence ID" value="TraesSTA3D03G01994540.1"/>
    <property type="gene ID" value="TraesSTA3D03G01994540"/>
</dbReference>
<dbReference type="Gramene" id="TraesSYM3A03G01548230.1">
    <property type="protein sequence ID" value="TraesSYM3A03G01548230.1"/>
    <property type="gene ID" value="TraesSYM3A03G01548230"/>
</dbReference>
<dbReference type="Gramene" id="TraesSYM3D03G02024670.1">
    <property type="protein sequence ID" value="TraesSYM3D03G02024670.1"/>
    <property type="gene ID" value="TraesSYM3D03G02024670"/>
</dbReference>
<dbReference type="Gramene" id="TraesWEE_scaffold_097257_01G000200.1">
    <property type="protein sequence ID" value="TraesWEE_scaffold_097257_01G000200.1"/>
    <property type="gene ID" value="TraesWEE_scaffold_097257_01G000200"/>
</dbReference>
<dbReference type="Gramene" id="TraesWEE_scaffold_104681_01G000100.1">
    <property type="protein sequence ID" value="TraesWEE_scaffold_104681_01G000100.1"/>
    <property type="gene ID" value="TraesWEE_scaffold_104681_01G000100"/>
</dbReference>
<dbReference type="eggNOG" id="KOG1670">
    <property type="taxonomic scope" value="Eukaryota"/>
</dbReference>
<dbReference type="HOGENOM" id="CLU_043552_2_1_1"/>
<dbReference type="OMA" id="QTEFKMM"/>
<dbReference type="OrthoDB" id="590761at2759"/>
<dbReference type="EvolutionaryTrace" id="P29557"/>
<dbReference type="Proteomes" id="UP000019116">
    <property type="component" value="Chromosome 3A"/>
</dbReference>
<dbReference type="Proteomes" id="UP000019116">
    <property type="component" value="Chromosome 3D"/>
</dbReference>
<dbReference type="ExpressionAtlas" id="P29557">
    <property type="expression patterns" value="baseline"/>
</dbReference>
<dbReference type="GO" id="GO:0005737">
    <property type="term" value="C:cytoplasm"/>
    <property type="evidence" value="ECO:0000250"/>
    <property type="project" value="UniProtKB"/>
</dbReference>
<dbReference type="GO" id="GO:0016281">
    <property type="term" value="C:eukaryotic translation initiation factor 4F complex"/>
    <property type="evidence" value="ECO:0000318"/>
    <property type="project" value="GO_Central"/>
</dbReference>
<dbReference type="GO" id="GO:0005634">
    <property type="term" value="C:nucleus"/>
    <property type="evidence" value="ECO:0000250"/>
    <property type="project" value="UniProtKB"/>
</dbReference>
<dbReference type="GO" id="GO:0000340">
    <property type="term" value="F:RNA 7-methylguanosine cap binding"/>
    <property type="evidence" value="ECO:0000318"/>
    <property type="project" value="GO_Central"/>
</dbReference>
<dbReference type="GO" id="GO:0003723">
    <property type="term" value="F:RNA binding"/>
    <property type="evidence" value="ECO:0000250"/>
    <property type="project" value="UniProtKB"/>
</dbReference>
<dbReference type="GO" id="GO:0003743">
    <property type="term" value="F:translation initiation factor activity"/>
    <property type="evidence" value="ECO:0000250"/>
    <property type="project" value="UniProtKB"/>
</dbReference>
<dbReference type="GO" id="GO:0051607">
    <property type="term" value="P:defense response to virus"/>
    <property type="evidence" value="ECO:0000250"/>
    <property type="project" value="UniProtKB"/>
</dbReference>
<dbReference type="GO" id="GO:0006417">
    <property type="term" value="P:regulation of translation"/>
    <property type="evidence" value="ECO:0007669"/>
    <property type="project" value="UniProtKB-KW"/>
</dbReference>
<dbReference type="GO" id="GO:0006413">
    <property type="term" value="P:translational initiation"/>
    <property type="evidence" value="ECO:0000250"/>
    <property type="project" value="UniProtKB"/>
</dbReference>
<dbReference type="FunFam" id="3.30.760.10:FF:000003">
    <property type="entry name" value="Eukaryotic translation initiation factor 4E"/>
    <property type="match status" value="1"/>
</dbReference>
<dbReference type="Gene3D" id="3.30.760.10">
    <property type="entry name" value="RNA Cap, Translation Initiation Factor Eif4e"/>
    <property type="match status" value="1"/>
</dbReference>
<dbReference type="InterPro" id="IPR023398">
    <property type="entry name" value="TIF_eIF4e-like"/>
</dbReference>
<dbReference type="InterPro" id="IPR001040">
    <property type="entry name" value="TIF_eIF_4E"/>
</dbReference>
<dbReference type="InterPro" id="IPR019770">
    <property type="entry name" value="TIF_eIF_4E_CS"/>
</dbReference>
<dbReference type="PANTHER" id="PTHR11960">
    <property type="entry name" value="EUKARYOTIC TRANSLATION INITIATION FACTOR 4E RELATED"/>
    <property type="match status" value="1"/>
</dbReference>
<dbReference type="PANTHER" id="PTHR11960:SF8">
    <property type="entry name" value="EUKARYOTIC TRANSLATION INITIATION FACTOR 4E1-RELATED"/>
    <property type="match status" value="1"/>
</dbReference>
<dbReference type="Pfam" id="PF01652">
    <property type="entry name" value="IF4E"/>
    <property type="match status" value="1"/>
</dbReference>
<dbReference type="SUPFAM" id="SSF55418">
    <property type="entry name" value="eIF4e-like"/>
    <property type="match status" value="1"/>
</dbReference>
<dbReference type="PROSITE" id="PS00813">
    <property type="entry name" value="IF4E"/>
    <property type="match status" value="1"/>
</dbReference>
<keyword id="KW-0002">3D-structure</keyword>
<keyword id="KW-0963">Cytoplasm</keyword>
<keyword id="KW-0903">Direct protein sequencing</keyword>
<keyword id="KW-1015">Disulfide bond</keyword>
<keyword id="KW-0396">Initiation factor</keyword>
<keyword id="KW-0539">Nucleus</keyword>
<keyword id="KW-0648">Protein biosynthesis</keyword>
<keyword id="KW-1185">Reference proteome</keyword>
<keyword id="KW-0694">RNA-binding</keyword>
<keyword id="KW-0810">Translation regulation</keyword>
<reference key="1">
    <citation type="submission" date="2002-09" db="EMBL/GenBank/DDBJ databases">
        <authorList>
            <person name="Metz A.M."/>
        </authorList>
    </citation>
    <scope>NUCLEOTIDE SEQUENCE [MRNA]</scope>
</reference>
<reference key="2">
    <citation type="submission" date="2016-06" db="EMBL/GenBank/DDBJ databases">
        <authorList>
            <person name="Kjaerup R.B."/>
            <person name="Dalgaard T.S."/>
            <person name="Juul-Madsen H.R."/>
        </authorList>
    </citation>
    <scope>NUCLEOTIDE SEQUENCE [MRNA]</scope>
    <source>
        <strain>cv. LM4</strain>
        <strain>cv. LY502</strain>
    </source>
</reference>
<reference key="3">
    <citation type="journal article" date="2014" name="Science">
        <title>Structural and functional partitioning of bread wheat chromosome 3B.</title>
        <authorList>
            <person name="Choulet F."/>
            <person name="Alberti A."/>
            <person name="Theil S."/>
            <person name="Glover N."/>
            <person name="Barbe V."/>
            <person name="Daron J."/>
            <person name="Pingault L."/>
            <person name="Sourdille P."/>
            <person name="Couloux A."/>
            <person name="Paux E."/>
            <person name="Leroy P."/>
            <person name="Mangenot S."/>
            <person name="Guilhot N."/>
            <person name="Le Gouis J."/>
            <person name="Balfourier F."/>
            <person name="Alaux M."/>
            <person name="Jamilloux V."/>
            <person name="Poulain J."/>
            <person name="Durand C."/>
            <person name="Bellec A."/>
            <person name="Gaspin C."/>
            <person name="Safar J."/>
            <person name="Dolezel J."/>
            <person name="Rogers J."/>
            <person name="Vandepoele K."/>
            <person name="Aury J.M."/>
            <person name="Mayer K."/>
            <person name="Berges H."/>
            <person name="Quesneville H."/>
            <person name="Wincker P."/>
            <person name="Feuillet C."/>
        </authorList>
    </citation>
    <scope>NUCLEOTIDE SEQUENCE [LARGE SCALE GENOMIC DNA]</scope>
    <source>
        <strain>cv. Chinese Spring</strain>
    </source>
</reference>
<reference key="4">
    <citation type="journal article" date="1992" name="Nucleic Acids Res.">
        <title>Isolation and sequence of a cDNA encoding the cap binding protein of wheat eukaryotic protein synthesis initiation factor 4F.</title>
        <authorList>
            <person name="Metz A.M."/>
            <person name="Timmer R.T."/>
            <person name="Browning K.S."/>
        </authorList>
    </citation>
    <scope>NUCLEOTIDE SEQUENCE [MRNA] OF 19-215</scope>
    <scope>PARTIAL PROTEIN SEQUENCE</scope>
    <scope>FUNCTION</scope>
    <scope>SUBUNIT</scope>
</reference>
<reference key="5">
    <citation type="journal article" date="2014" name="Infect. Genet. Evol.">
        <title>Evolution of plant eukaryotic initiation factor 4E (eIF4E) and potyvirus genome-linked protein (VPg): a game of mirrors impacting resistance spectrum and durability.</title>
        <authorList>
            <person name="Moury B."/>
            <person name="Charron C."/>
            <person name="Janzac B."/>
            <person name="Simon V."/>
            <person name="Gallois J.L."/>
            <person name="Palloix A."/>
            <person name="Caranta C."/>
        </authorList>
    </citation>
    <scope>GENE FAMILY</scope>
    <scope>REVIEW</scope>
</reference>
<reference key="6">
    <citation type="journal article" date="2007" name="Plant Physiol.">
        <title>The structure of eukaryotic translation initiation factor-4E from wheat reveals a novel disulfide bond.</title>
        <authorList>
            <person name="Monzingo A.F."/>
            <person name="Dhaliwal S."/>
            <person name="Dutt-Chaudhuri A."/>
            <person name="Lyon A."/>
            <person name="Sadow J.H."/>
            <person name="Hoffman D.W."/>
            <person name="Robertus J.D."/>
            <person name="Browning K.S."/>
        </authorList>
    </citation>
    <scope>X-RAY CRYSTALLOGRAPHY (1.85 ANGSTROMS) OF 39-215 IN COMPLEX WITH 7-METHYLGUANOSINE</scope>
    <scope>FUNCTION</scope>
    <scope>DISULFIDE BONDS</scope>
</reference>
<name>IF4E1_WHEAT</name>
<gene>
    <name evidence="6" type="primary">eIF4E</name>
    <name evidence="9" type="ORF">TRAES_3BF151900060CFD_c1</name>
</gene>
<protein>
    <recommendedName>
        <fullName evidence="6">Eukaryotic translation initiation factor 4E-1</fullName>
        <shortName evidence="6">eIF-4E-1</shortName>
        <shortName evidence="6">eIF4E-1</shortName>
    </recommendedName>
    <alternativeName>
        <fullName evidence="6">eIF-4F 25 kDa subunit</fullName>
    </alternativeName>
    <alternativeName>
        <fullName evidence="6">eIF-4F p26 subunit</fullName>
    </alternativeName>
    <alternativeName>
        <fullName evidence="6">mRNA cap-binding protein</fullName>
    </alternativeName>
</protein>
<sequence length="215" mass="23991">MAEDTETRPASAGAEEREEGEIADDGDGSSAAAAGRITAHPLENAWTFWFDNPQGKSRQVAWGSTIHPIHTFSTVEDFWGLYNNIHNPSKLNVGADFHCFKNKIEPKWEDPICANGGKWTISCGRGKSDTFWLHTLLAMIGEQFDFGDEICGAVVSVRQKQERVAIWTKNAANEAAQISIGKQWKEFLDYKDSIGFIVHEDAKRSDKGPKNRYTV</sequence>
<evidence type="ECO:0000250" key="1">
    <source>
        <dbReference type="UniProtKB" id="K0P2S0"/>
    </source>
</evidence>
<evidence type="ECO:0000250" key="2">
    <source>
        <dbReference type="UniProtKB" id="Q00LS8"/>
    </source>
</evidence>
<evidence type="ECO:0000256" key="3">
    <source>
        <dbReference type="SAM" id="MobiDB-lite"/>
    </source>
</evidence>
<evidence type="ECO:0000269" key="4">
    <source>
    </source>
</evidence>
<evidence type="ECO:0000269" key="5">
    <source>
    </source>
</evidence>
<evidence type="ECO:0000303" key="6">
    <source>
    </source>
</evidence>
<evidence type="ECO:0000305" key="7"/>
<evidence type="ECO:0000305" key="8">
    <source>
    </source>
</evidence>
<evidence type="ECO:0000312" key="9">
    <source>
        <dbReference type="EMBL" id="CDJ26525.1"/>
    </source>
</evidence>
<evidence type="ECO:0007744" key="10">
    <source>
        <dbReference type="PDB" id="2IDR"/>
    </source>
</evidence>
<evidence type="ECO:0007744" key="11">
    <source>
        <dbReference type="PDB" id="2IDV"/>
    </source>
</evidence>
<evidence type="ECO:0007829" key="12">
    <source>
        <dbReference type="PDB" id="2IDR"/>
    </source>
</evidence>